<gene>
    <name evidence="8 13" type="primary">modSP</name>
    <name evidence="11" type="synonym">Ldlr</name>
    <name evidence="13" type="ORF">CG31217</name>
</gene>
<proteinExistence type="evidence at protein level"/>
<comment type="function">
    <text evidence="6 7">Serine protease that plays a key role in innate immunity by activating the Toll pathway in response to infection with Gram-positive bacteria and fungi (PubMed:19590012, PubMed:24794300). During Gram-positive infection, acts downstream of PGRP-SA and upstream of Grass and Spz, and therefore appears to function in a pathway that links detection of Gram-positive lysine-type peptidoglycans to Toll activation (PubMed:19590012). Functions in a separate pathway to the psh-mediated activation of the Toll pathway (PubMed:19590012).</text>
</comment>
<comment type="subcellular location">
    <subcellularLocation>
        <location evidence="6">Secreted</location>
    </subcellularLocation>
    <text evidence="6">Localizes at the membrane of lipid vesicles. Secreted from the fat body into the hemolymph at the surface of these lipid vesicles.</text>
</comment>
<comment type="PTM">
    <text evidence="6">May be proteolytically cleaved via an autocatalytic mechanism.</text>
</comment>
<comment type="disruption phenotype">
    <text evidence="6 7">No visible phenotype (PubMed:19590012). Viable but highly susceptible to septic injury with Gram-positive bacteria and fungi (PubMed:19590012, PubMed:24794300). Adults infected with Gram-positive bacteria E.faecalis and L.monocytogenes rapidly succumb to infection (PubMed:19590012), and display reduced expression of the antimicrobial peptide gene Drs in response to septic injury with the Gram-positive bacteria M.luteus and E.faecalis and also after injection with their purified peptidoglycans (PubMed:19590012). Adults infected with C.albicans display a severe reduction in survival after infection, and show reduced expression of Drs in response to septic injury with living C.albicans and after injection with dead C.albicans (PubMed:19590012). Moderate reduction in survival and Drs expression after infection with A.fumigatus spores (PubMed:19590012). Stage 15 embryos also display reduced survival and Drs expression after injection with M.luteus and a moderate decrease in survival after injection with proteases from the fungus A.oryzae (PubMed:24794300). No effect on survival after septic injury with the Gram-negative bacteria E.carotovora (PubMed:19590012). In adults, no effect on Drs expression after injection of proteases derived from the fungi A.oryzae and B.subtilis (PubMed:19590012). In embryos, no effect on survival or expression of the antimicrobial peptide DptA after infection with the Gram-negative bacteria Ecc15 (PubMed:24794300).</text>
</comment>
<comment type="similarity">
    <text evidence="3">Belongs to the peptidase S1 family.</text>
</comment>
<feature type="signal peptide" evidence="1">
    <location>
        <begin position="1"/>
        <end position="25"/>
    </location>
</feature>
<feature type="chain" id="PRO_0000437749" description="Modular serine protease non-catalytic chain" evidence="10">
    <location>
        <begin position="26"/>
        <end position="368"/>
    </location>
</feature>
<feature type="chain" id="PRO_0000437750" description="Modular serine protease catalytic chain" evidence="10">
    <location>
        <begin position="369"/>
        <end position="628"/>
    </location>
</feature>
<feature type="domain" description="LDL-receptor class A 1" evidence="2">
    <location>
        <begin position="26"/>
        <end position="64"/>
    </location>
</feature>
<feature type="domain" description="LDL-receptor class A 2" evidence="2">
    <location>
        <begin position="69"/>
        <end position="107"/>
    </location>
</feature>
<feature type="domain" description="LDL-receptor class A 3" evidence="2">
    <location>
        <begin position="122"/>
        <end position="163"/>
    </location>
</feature>
<feature type="domain" description="LDL-receptor class A 4" evidence="2">
    <location>
        <begin position="166"/>
        <end position="204"/>
    </location>
</feature>
<feature type="domain" description="Sushi 1" evidence="4">
    <location>
        <begin position="222"/>
        <end position="285"/>
    </location>
</feature>
<feature type="domain" description="Sushi 2" evidence="4">
    <location>
        <begin position="300"/>
        <end position="356"/>
    </location>
</feature>
<feature type="domain" description="Peptidase S1" evidence="3">
    <location>
        <begin position="369"/>
        <end position="621"/>
    </location>
</feature>
<feature type="active site" description="Charge relay system" evidence="3">
    <location>
        <position position="414"/>
    </location>
</feature>
<feature type="active site" description="Charge relay system" evidence="3">
    <location>
        <position position="472"/>
    </location>
</feature>
<feature type="active site" description="Charge relay system" evidence="3">
    <location>
        <position position="563"/>
    </location>
</feature>
<feature type="site" description="Cleavage" evidence="6">
    <location>
        <begin position="368"/>
        <end position="369"/>
    </location>
</feature>
<feature type="glycosylation site" description="N-linked (GlcNAc...) asparagine" evidence="5">
    <location>
        <position position="36"/>
    </location>
</feature>
<feature type="glycosylation site" description="N-linked (GlcNAc...) asparagine" evidence="5">
    <location>
        <position position="204"/>
    </location>
</feature>
<feature type="glycosylation site" description="N-linked (GlcNAc...) asparagine" evidence="5">
    <location>
        <position position="376"/>
    </location>
</feature>
<feature type="glycosylation site" description="N-linked (GlcNAc...) asparagine" evidence="5">
    <location>
        <position position="621"/>
    </location>
</feature>
<feature type="disulfide bond" evidence="2">
    <location>
        <begin position="27"/>
        <end position="39"/>
    </location>
</feature>
<feature type="disulfide bond" evidence="2">
    <location>
        <begin position="34"/>
        <end position="52"/>
    </location>
</feature>
<feature type="disulfide bond" evidence="2">
    <location>
        <begin position="46"/>
        <end position="63"/>
    </location>
</feature>
<feature type="disulfide bond" evidence="2">
    <location>
        <begin position="70"/>
        <end position="82"/>
    </location>
</feature>
<feature type="disulfide bond" evidence="2">
    <location>
        <begin position="77"/>
        <end position="95"/>
    </location>
</feature>
<feature type="disulfide bond" evidence="2">
    <location>
        <begin position="89"/>
        <end position="106"/>
    </location>
</feature>
<feature type="disulfide bond" evidence="2">
    <location>
        <begin position="123"/>
        <end position="135"/>
    </location>
</feature>
<feature type="disulfide bond" evidence="2">
    <location>
        <begin position="130"/>
        <end position="149"/>
    </location>
</feature>
<feature type="disulfide bond" evidence="2">
    <location>
        <begin position="143"/>
        <end position="162"/>
    </location>
</feature>
<feature type="disulfide bond" evidence="2">
    <location>
        <begin position="167"/>
        <end position="179"/>
    </location>
</feature>
<feature type="disulfide bond" evidence="2">
    <location>
        <begin position="174"/>
        <end position="192"/>
    </location>
</feature>
<feature type="disulfide bond" evidence="2">
    <location>
        <begin position="186"/>
        <end position="203"/>
    </location>
</feature>
<feature type="disulfide bond" evidence="4">
    <location>
        <begin position="224"/>
        <end position="270"/>
    </location>
</feature>
<feature type="disulfide bond" evidence="4">
    <location>
        <begin position="256"/>
        <end position="283"/>
    </location>
</feature>
<feature type="disulfide bond" evidence="4">
    <location>
        <begin position="302"/>
        <end position="341"/>
    </location>
</feature>
<feature type="disulfide bond" evidence="4">
    <location>
        <begin position="326"/>
        <end position="354"/>
    </location>
</feature>
<feature type="disulfide bond" evidence="3">
    <location>
        <begin position="399"/>
        <end position="415"/>
    </location>
</feature>
<keyword id="KW-0068">Autocatalytic cleavage</keyword>
<keyword id="KW-1015">Disulfide bond</keyword>
<keyword id="KW-0325">Glycoprotein</keyword>
<keyword id="KW-0378">Hydrolase</keyword>
<keyword id="KW-0391">Immunity</keyword>
<keyword id="KW-0399">Innate immunity</keyword>
<keyword id="KW-0645">Protease</keyword>
<keyword id="KW-1185">Reference proteome</keyword>
<keyword id="KW-0677">Repeat</keyword>
<keyword id="KW-0964">Secreted</keyword>
<keyword id="KW-0720">Serine protease</keyword>
<keyword id="KW-0732">Signal</keyword>
<keyword id="KW-0768">Sushi</keyword>
<keyword id="KW-0865">Zymogen</keyword>
<dbReference type="EC" id="3.4.21.-" evidence="6"/>
<dbReference type="EMBL" id="AE014297">
    <property type="protein sequence ID" value="AAF55354.2"/>
    <property type="molecule type" value="Genomic_DNA"/>
</dbReference>
<dbReference type="EMBL" id="AY118964">
    <property type="protein sequence ID" value="AAM50824.1"/>
    <property type="molecule type" value="mRNA"/>
</dbReference>
<dbReference type="EMBL" id="BT011129">
    <property type="protein sequence ID" value="AAR82796.1"/>
    <property type="molecule type" value="mRNA"/>
</dbReference>
<dbReference type="RefSeq" id="NP_536776.2">
    <property type="nucleotide sequence ID" value="NM_080515.3"/>
</dbReference>
<dbReference type="SMR" id="Q9VER6"/>
<dbReference type="FunCoup" id="Q9VER6">
    <property type="interactions" value="105"/>
</dbReference>
<dbReference type="IntAct" id="Q9VER6">
    <property type="interactions" value="5"/>
</dbReference>
<dbReference type="STRING" id="7227.FBpp0082798"/>
<dbReference type="MEROPS" id="S01.508"/>
<dbReference type="GlyCosmos" id="Q9VER6">
    <property type="glycosylation" value="4 sites, No reported glycans"/>
</dbReference>
<dbReference type="GlyGen" id="Q9VER6">
    <property type="glycosylation" value="4 sites"/>
</dbReference>
<dbReference type="PaxDb" id="7227-FBpp0082798"/>
<dbReference type="DNASU" id="42032"/>
<dbReference type="EnsemblMetazoa" id="FBtr0083353">
    <property type="protein sequence ID" value="FBpp0082798"/>
    <property type="gene ID" value="FBgn0051217"/>
</dbReference>
<dbReference type="GeneID" id="42032"/>
<dbReference type="KEGG" id="dme:Dmel_CG31217"/>
<dbReference type="UCSC" id="CG31217-RA">
    <property type="organism name" value="d. melanogaster"/>
</dbReference>
<dbReference type="AGR" id="FB:FBgn0051217"/>
<dbReference type="CTD" id="42032"/>
<dbReference type="FlyBase" id="FBgn0051217">
    <property type="gene designation" value="modSP"/>
</dbReference>
<dbReference type="VEuPathDB" id="VectorBase:FBgn0051217"/>
<dbReference type="eggNOG" id="KOG3627">
    <property type="taxonomic scope" value="Eukaryota"/>
</dbReference>
<dbReference type="GeneTree" id="ENSGT00940000167619"/>
<dbReference type="HOGENOM" id="CLU_027452_1_0_1"/>
<dbReference type="InParanoid" id="Q9VER6"/>
<dbReference type="OMA" id="NEIKCPS"/>
<dbReference type="OrthoDB" id="2019384at2759"/>
<dbReference type="PhylomeDB" id="Q9VER6"/>
<dbReference type="SignaLink" id="Q9VER6"/>
<dbReference type="BioGRID-ORCS" id="42032">
    <property type="hits" value="0 hits in 1 CRISPR screen"/>
</dbReference>
<dbReference type="GenomeRNAi" id="42032"/>
<dbReference type="PRO" id="PR:Q9VER6"/>
<dbReference type="Proteomes" id="UP000000803">
    <property type="component" value="Chromosome 3R"/>
</dbReference>
<dbReference type="Bgee" id="FBgn0051217">
    <property type="expression patterns" value="Expressed in crop (Drosophila) and 84 other cell types or tissues"/>
</dbReference>
<dbReference type="ExpressionAtlas" id="Q9VER6">
    <property type="expression patterns" value="baseline and differential"/>
</dbReference>
<dbReference type="GO" id="GO:0005615">
    <property type="term" value="C:extracellular space"/>
    <property type="evidence" value="ECO:0000318"/>
    <property type="project" value="GO_Central"/>
</dbReference>
<dbReference type="GO" id="GO:0004252">
    <property type="term" value="F:serine-type endopeptidase activity"/>
    <property type="evidence" value="ECO:0000255"/>
    <property type="project" value="FlyBase"/>
</dbReference>
<dbReference type="GO" id="GO:0050832">
    <property type="term" value="P:defense response to fungus"/>
    <property type="evidence" value="ECO:0000316"/>
    <property type="project" value="FlyBase"/>
</dbReference>
<dbReference type="GO" id="GO:0050830">
    <property type="term" value="P:defense response to Gram-positive bacterium"/>
    <property type="evidence" value="ECO:0000315"/>
    <property type="project" value="UniProtKB"/>
</dbReference>
<dbReference type="GO" id="GO:0045087">
    <property type="term" value="P:innate immune response"/>
    <property type="evidence" value="ECO:0000315"/>
    <property type="project" value="UniProtKB"/>
</dbReference>
<dbReference type="GO" id="GO:0035008">
    <property type="term" value="P:positive regulation of melanization defense response"/>
    <property type="evidence" value="ECO:0000316"/>
    <property type="project" value="FlyBase"/>
</dbReference>
<dbReference type="GO" id="GO:0006508">
    <property type="term" value="P:proteolysis"/>
    <property type="evidence" value="ECO:0000255"/>
    <property type="project" value="FlyBase"/>
</dbReference>
<dbReference type="GO" id="GO:0007168">
    <property type="term" value="P:receptor guanylyl cyclase signaling pathway"/>
    <property type="evidence" value="ECO:0000316"/>
    <property type="project" value="FlyBase"/>
</dbReference>
<dbReference type="GO" id="GO:0160032">
    <property type="term" value="P:Toll receptor ligand protein activation cascade"/>
    <property type="evidence" value="ECO:0000314"/>
    <property type="project" value="FlyBase"/>
</dbReference>
<dbReference type="CDD" id="cd00033">
    <property type="entry name" value="CCP"/>
    <property type="match status" value="2"/>
</dbReference>
<dbReference type="CDD" id="cd00112">
    <property type="entry name" value="LDLa"/>
    <property type="match status" value="4"/>
</dbReference>
<dbReference type="FunFam" id="2.10.70.10:FF:000188">
    <property type="entry name" value="Modular serine protease"/>
    <property type="match status" value="1"/>
</dbReference>
<dbReference type="FunFam" id="4.10.400.10:FF:000253">
    <property type="entry name" value="Modular serine protease"/>
    <property type="match status" value="1"/>
</dbReference>
<dbReference type="Gene3D" id="2.10.70.10">
    <property type="entry name" value="Complement Module, domain 1"/>
    <property type="match status" value="1"/>
</dbReference>
<dbReference type="Gene3D" id="4.10.400.10">
    <property type="entry name" value="Low-density Lipoprotein Receptor"/>
    <property type="match status" value="4"/>
</dbReference>
<dbReference type="Gene3D" id="2.40.10.10">
    <property type="entry name" value="Trypsin-like serine proteases"/>
    <property type="match status" value="1"/>
</dbReference>
<dbReference type="InterPro" id="IPR036055">
    <property type="entry name" value="LDL_receptor-like_sf"/>
</dbReference>
<dbReference type="InterPro" id="IPR023415">
    <property type="entry name" value="LDLR_class-A_CS"/>
</dbReference>
<dbReference type="InterPro" id="IPR002172">
    <property type="entry name" value="LDrepeatLR_classA_rpt"/>
</dbReference>
<dbReference type="InterPro" id="IPR009003">
    <property type="entry name" value="Peptidase_S1_PA"/>
</dbReference>
<dbReference type="InterPro" id="IPR043504">
    <property type="entry name" value="Peptidase_S1_PA_chymotrypsin"/>
</dbReference>
<dbReference type="InterPro" id="IPR035976">
    <property type="entry name" value="Sushi/SCR/CCP_sf"/>
</dbReference>
<dbReference type="InterPro" id="IPR000436">
    <property type="entry name" value="Sushi_SCR_CCP_dom"/>
</dbReference>
<dbReference type="InterPro" id="IPR001254">
    <property type="entry name" value="Trypsin_dom"/>
</dbReference>
<dbReference type="InterPro" id="IPR018114">
    <property type="entry name" value="TRYPSIN_HIS"/>
</dbReference>
<dbReference type="PANTHER" id="PTHR24252">
    <property type="entry name" value="ACROSIN-RELATED"/>
    <property type="match status" value="1"/>
</dbReference>
<dbReference type="PANTHER" id="PTHR24252:SF7">
    <property type="entry name" value="HYALIN"/>
    <property type="match status" value="1"/>
</dbReference>
<dbReference type="Pfam" id="PF00057">
    <property type="entry name" value="Ldl_recept_a"/>
    <property type="match status" value="3"/>
</dbReference>
<dbReference type="Pfam" id="PF00084">
    <property type="entry name" value="Sushi"/>
    <property type="match status" value="2"/>
</dbReference>
<dbReference type="Pfam" id="PF00089">
    <property type="entry name" value="Trypsin"/>
    <property type="match status" value="1"/>
</dbReference>
<dbReference type="PRINTS" id="PR00261">
    <property type="entry name" value="LDLRECEPTOR"/>
</dbReference>
<dbReference type="SMART" id="SM00032">
    <property type="entry name" value="CCP"/>
    <property type="match status" value="2"/>
</dbReference>
<dbReference type="SMART" id="SM00192">
    <property type="entry name" value="LDLa"/>
    <property type="match status" value="4"/>
</dbReference>
<dbReference type="SMART" id="SM00020">
    <property type="entry name" value="Tryp_SPc"/>
    <property type="match status" value="1"/>
</dbReference>
<dbReference type="SUPFAM" id="SSF57535">
    <property type="entry name" value="Complement control module/SCR domain"/>
    <property type="match status" value="1"/>
</dbReference>
<dbReference type="SUPFAM" id="SSF57424">
    <property type="entry name" value="LDL receptor-like module"/>
    <property type="match status" value="4"/>
</dbReference>
<dbReference type="SUPFAM" id="SSF50494">
    <property type="entry name" value="Trypsin-like serine proteases"/>
    <property type="match status" value="1"/>
</dbReference>
<dbReference type="PROSITE" id="PS01209">
    <property type="entry name" value="LDLRA_1"/>
    <property type="match status" value="3"/>
</dbReference>
<dbReference type="PROSITE" id="PS50068">
    <property type="entry name" value="LDLRA_2"/>
    <property type="match status" value="4"/>
</dbReference>
<dbReference type="PROSITE" id="PS50923">
    <property type="entry name" value="SUSHI"/>
    <property type="match status" value="2"/>
</dbReference>
<dbReference type="PROSITE" id="PS50240">
    <property type="entry name" value="TRYPSIN_DOM"/>
    <property type="match status" value="1"/>
</dbReference>
<dbReference type="PROSITE" id="PS00134">
    <property type="entry name" value="TRYPSIN_HIS"/>
    <property type="match status" value="1"/>
</dbReference>
<protein>
    <recommendedName>
        <fullName evidence="8">Modular serine protease</fullName>
        <ecNumber evidence="6">3.4.21.-</ecNumber>
    </recommendedName>
    <component>
        <recommendedName>
            <fullName evidence="10">Modular serine protease non-catalytic chain</fullName>
        </recommendedName>
    </component>
    <component>
        <recommendedName>
            <fullName evidence="10">Modular serine protease catalytic chain</fullName>
        </recommendedName>
    </component>
</protein>
<organism>
    <name type="scientific">Drosophila melanogaster</name>
    <name type="common">Fruit fly</name>
    <dbReference type="NCBI Taxonomy" id="7227"/>
    <lineage>
        <taxon>Eukaryota</taxon>
        <taxon>Metazoa</taxon>
        <taxon>Ecdysozoa</taxon>
        <taxon>Arthropoda</taxon>
        <taxon>Hexapoda</taxon>
        <taxon>Insecta</taxon>
        <taxon>Pterygota</taxon>
        <taxon>Neoptera</taxon>
        <taxon>Endopterygota</taxon>
        <taxon>Diptera</taxon>
        <taxon>Brachycera</taxon>
        <taxon>Muscomorpha</taxon>
        <taxon>Ephydroidea</taxon>
        <taxon>Drosophilidae</taxon>
        <taxon>Drosophila</taxon>
        <taxon>Sophophora</taxon>
    </lineage>
</organism>
<reference evidence="14" key="1">
    <citation type="journal article" date="2000" name="Science">
        <title>The genome sequence of Drosophila melanogaster.</title>
        <authorList>
            <person name="Adams M.D."/>
            <person name="Celniker S.E."/>
            <person name="Holt R.A."/>
            <person name="Evans C.A."/>
            <person name="Gocayne J.D."/>
            <person name="Amanatides P.G."/>
            <person name="Scherer S.E."/>
            <person name="Li P.W."/>
            <person name="Hoskins R.A."/>
            <person name="Galle R.F."/>
            <person name="George R.A."/>
            <person name="Lewis S.E."/>
            <person name="Richards S."/>
            <person name="Ashburner M."/>
            <person name="Henderson S.N."/>
            <person name="Sutton G.G."/>
            <person name="Wortman J.R."/>
            <person name="Yandell M.D."/>
            <person name="Zhang Q."/>
            <person name="Chen L.X."/>
            <person name="Brandon R.C."/>
            <person name="Rogers Y.-H.C."/>
            <person name="Blazej R.G."/>
            <person name="Champe M."/>
            <person name="Pfeiffer B.D."/>
            <person name="Wan K.H."/>
            <person name="Doyle C."/>
            <person name="Baxter E.G."/>
            <person name="Helt G."/>
            <person name="Nelson C.R."/>
            <person name="Miklos G.L.G."/>
            <person name="Abril J.F."/>
            <person name="Agbayani A."/>
            <person name="An H.-J."/>
            <person name="Andrews-Pfannkoch C."/>
            <person name="Baldwin D."/>
            <person name="Ballew R.M."/>
            <person name="Basu A."/>
            <person name="Baxendale J."/>
            <person name="Bayraktaroglu L."/>
            <person name="Beasley E.M."/>
            <person name="Beeson K.Y."/>
            <person name="Benos P.V."/>
            <person name="Berman B.P."/>
            <person name="Bhandari D."/>
            <person name="Bolshakov S."/>
            <person name="Borkova D."/>
            <person name="Botchan M.R."/>
            <person name="Bouck J."/>
            <person name="Brokstein P."/>
            <person name="Brottier P."/>
            <person name="Burtis K.C."/>
            <person name="Busam D.A."/>
            <person name="Butler H."/>
            <person name="Cadieu E."/>
            <person name="Center A."/>
            <person name="Chandra I."/>
            <person name="Cherry J.M."/>
            <person name="Cawley S."/>
            <person name="Dahlke C."/>
            <person name="Davenport L.B."/>
            <person name="Davies P."/>
            <person name="de Pablos B."/>
            <person name="Delcher A."/>
            <person name="Deng Z."/>
            <person name="Mays A.D."/>
            <person name="Dew I."/>
            <person name="Dietz S.M."/>
            <person name="Dodson K."/>
            <person name="Doup L.E."/>
            <person name="Downes M."/>
            <person name="Dugan-Rocha S."/>
            <person name="Dunkov B.C."/>
            <person name="Dunn P."/>
            <person name="Durbin K.J."/>
            <person name="Evangelista C.C."/>
            <person name="Ferraz C."/>
            <person name="Ferriera S."/>
            <person name="Fleischmann W."/>
            <person name="Fosler C."/>
            <person name="Gabrielian A.E."/>
            <person name="Garg N.S."/>
            <person name="Gelbart W.M."/>
            <person name="Glasser K."/>
            <person name="Glodek A."/>
            <person name="Gong F."/>
            <person name="Gorrell J.H."/>
            <person name="Gu Z."/>
            <person name="Guan P."/>
            <person name="Harris M."/>
            <person name="Harris N.L."/>
            <person name="Harvey D.A."/>
            <person name="Heiman T.J."/>
            <person name="Hernandez J.R."/>
            <person name="Houck J."/>
            <person name="Hostin D."/>
            <person name="Houston K.A."/>
            <person name="Howland T.J."/>
            <person name="Wei M.-H."/>
            <person name="Ibegwam C."/>
            <person name="Jalali M."/>
            <person name="Kalush F."/>
            <person name="Karpen G.H."/>
            <person name="Ke Z."/>
            <person name="Kennison J.A."/>
            <person name="Ketchum K.A."/>
            <person name="Kimmel B.E."/>
            <person name="Kodira C.D."/>
            <person name="Kraft C.L."/>
            <person name="Kravitz S."/>
            <person name="Kulp D."/>
            <person name="Lai Z."/>
            <person name="Lasko P."/>
            <person name="Lei Y."/>
            <person name="Levitsky A.A."/>
            <person name="Li J.H."/>
            <person name="Li Z."/>
            <person name="Liang Y."/>
            <person name="Lin X."/>
            <person name="Liu X."/>
            <person name="Mattei B."/>
            <person name="McIntosh T.C."/>
            <person name="McLeod M.P."/>
            <person name="McPherson D."/>
            <person name="Merkulov G."/>
            <person name="Milshina N.V."/>
            <person name="Mobarry C."/>
            <person name="Morris J."/>
            <person name="Moshrefi A."/>
            <person name="Mount S.M."/>
            <person name="Moy M."/>
            <person name="Murphy B."/>
            <person name="Murphy L."/>
            <person name="Muzny D.M."/>
            <person name="Nelson D.L."/>
            <person name="Nelson D.R."/>
            <person name="Nelson K.A."/>
            <person name="Nixon K."/>
            <person name="Nusskern D.R."/>
            <person name="Pacleb J.M."/>
            <person name="Palazzolo M."/>
            <person name="Pittman G.S."/>
            <person name="Pan S."/>
            <person name="Pollard J."/>
            <person name="Puri V."/>
            <person name="Reese M.G."/>
            <person name="Reinert K."/>
            <person name="Remington K."/>
            <person name="Saunders R.D.C."/>
            <person name="Scheeler F."/>
            <person name="Shen H."/>
            <person name="Shue B.C."/>
            <person name="Siden-Kiamos I."/>
            <person name="Simpson M."/>
            <person name="Skupski M.P."/>
            <person name="Smith T.J."/>
            <person name="Spier E."/>
            <person name="Spradling A.C."/>
            <person name="Stapleton M."/>
            <person name="Strong R."/>
            <person name="Sun E."/>
            <person name="Svirskas R."/>
            <person name="Tector C."/>
            <person name="Turner R."/>
            <person name="Venter E."/>
            <person name="Wang A.H."/>
            <person name="Wang X."/>
            <person name="Wang Z.-Y."/>
            <person name="Wassarman D.A."/>
            <person name="Weinstock G.M."/>
            <person name="Weissenbach J."/>
            <person name="Williams S.M."/>
            <person name="Woodage T."/>
            <person name="Worley K.C."/>
            <person name="Wu D."/>
            <person name="Yang S."/>
            <person name="Yao Q.A."/>
            <person name="Ye J."/>
            <person name="Yeh R.-F."/>
            <person name="Zaveri J.S."/>
            <person name="Zhan M."/>
            <person name="Zhang G."/>
            <person name="Zhao Q."/>
            <person name="Zheng L."/>
            <person name="Zheng X.H."/>
            <person name="Zhong F.N."/>
            <person name="Zhong W."/>
            <person name="Zhou X."/>
            <person name="Zhu S.C."/>
            <person name="Zhu X."/>
            <person name="Smith H.O."/>
            <person name="Gibbs R.A."/>
            <person name="Myers E.W."/>
            <person name="Rubin G.M."/>
            <person name="Venter J.C."/>
        </authorList>
    </citation>
    <scope>NUCLEOTIDE SEQUENCE [LARGE SCALE GENOMIC DNA]</scope>
    <source>
        <strain evidence="14">Berkeley</strain>
    </source>
</reference>
<reference evidence="14" key="2">
    <citation type="journal article" date="2002" name="Genome Biol.">
        <title>Annotation of the Drosophila melanogaster euchromatic genome: a systematic review.</title>
        <authorList>
            <person name="Misra S."/>
            <person name="Crosby M.A."/>
            <person name="Mungall C.J."/>
            <person name="Matthews B.B."/>
            <person name="Campbell K.S."/>
            <person name="Hradecky P."/>
            <person name="Huang Y."/>
            <person name="Kaminker J.S."/>
            <person name="Millburn G.H."/>
            <person name="Prochnik S.E."/>
            <person name="Smith C.D."/>
            <person name="Tupy J.L."/>
            <person name="Whitfield E.J."/>
            <person name="Bayraktaroglu L."/>
            <person name="Berman B.P."/>
            <person name="Bettencourt B.R."/>
            <person name="Celniker S.E."/>
            <person name="de Grey A.D.N.J."/>
            <person name="Drysdale R.A."/>
            <person name="Harris N.L."/>
            <person name="Richter J."/>
            <person name="Russo S."/>
            <person name="Schroeder A.J."/>
            <person name="Shu S.Q."/>
            <person name="Stapleton M."/>
            <person name="Yamada C."/>
            <person name="Ashburner M."/>
            <person name="Gelbart W.M."/>
            <person name="Rubin G.M."/>
            <person name="Lewis S.E."/>
        </authorList>
    </citation>
    <scope>GENOME REANNOTATION</scope>
    <source>
        <strain evidence="14">Berkeley</strain>
    </source>
</reference>
<reference evidence="11" key="3">
    <citation type="journal article" date="2002" name="Genome Biol.">
        <title>A Drosophila full-length cDNA resource.</title>
        <authorList>
            <person name="Stapleton M."/>
            <person name="Carlson J.W."/>
            <person name="Brokstein P."/>
            <person name="Yu C."/>
            <person name="Champe M."/>
            <person name="George R.A."/>
            <person name="Guarin H."/>
            <person name="Kronmiller B."/>
            <person name="Pacleb J.M."/>
            <person name="Park S."/>
            <person name="Wan K.H."/>
            <person name="Rubin G.M."/>
            <person name="Celniker S.E."/>
        </authorList>
    </citation>
    <scope>NUCLEOTIDE SEQUENCE [LARGE SCALE MRNA]</scope>
    <source>
        <strain evidence="11">Berkeley</strain>
        <tissue evidence="11">Embryo</tissue>
    </source>
</reference>
<reference evidence="12" key="4">
    <citation type="submission" date="2003-12" db="EMBL/GenBank/DDBJ databases">
        <authorList>
            <person name="Stapleton M."/>
            <person name="Brokstein P."/>
            <person name="Hong L."/>
            <person name="Agbayani A."/>
            <person name="Carlson J."/>
            <person name="Champe M."/>
            <person name="Chavez C."/>
            <person name="Dorsett V."/>
            <person name="Dresnek D."/>
            <person name="Farfan D."/>
            <person name="Frise E."/>
            <person name="George R."/>
            <person name="Gonzalez M."/>
            <person name="Guarin H."/>
            <person name="Kronmiller B."/>
            <person name="Li P."/>
            <person name="Liao G."/>
            <person name="Miranda A."/>
            <person name="Mungall C.J."/>
            <person name="Nunoo J."/>
            <person name="Pacleb J."/>
            <person name="Paragas V."/>
            <person name="Park S."/>
            <person name="Patel S."/>
            <person name="Phouanenavong S."/>
            <person name="Wan K."/>
            <person name="Yu C."/>
            <person name="Lewis S.E."/>
            <person name="Rubin G.M."/>
            <person name="Celniker S."/>
        </authorList>
    </citation>
    <scope>NUCLEOTIDE SEQUENCE [LARGE SCALE MRNA] OF 211-628</scope>
    <source>
        <strain evidence="12">Berkeley</strain>
        <tissue evidence="12">Head</tissue>
    </source>
</reference>
<reference evidence="9" key="5">
    <citation type="journal article" date="2009" name="Proc. Natl. Acad. Sci. U.S.A.">
        <title>A single modular serine protease integrates signals from pattern-recognition receptors upstream of the Drosophila Toll pathway.</title>
        <authorList>
            <person name="Buchon N."/>
            <person name="Poidevin M."/>
            <person name="Kwon H.M."/>
            <person name="Guillou A."/>
            <person name="Sottas V."/>
            <person name="Lee B.L."/>
            <person name="Lemaitre B."/>
        </authorList>
    </citation>
    <scope>FUNCTION</scope>
    <scope>SUBCELLULAR LOCATION</scope>
    <scope>PROTEOLYTIC CLEAVAGE</scope>
    <scope>DISRUPTION PHENOTYPE</scope>
</reference>
<reference evidence="9" key="6">
    <citation type="journal article" date="2014" name="Curr. Biol.">
        <title>Ecdysone mediates the development of immunity in the Drosophila embryo.</title>
        <authorList>
            <person name="Tan K.L."/>
            <person name="Vlisidou I."/>
            <person name="Wood W."/>
        </authorList>
    </citation>
    <scope>FUNCTION</scope>
    <scope>DISRUPTION PHENOTYPE</scope>
</reference>
<sequence length="628" mass="69433">MQLISFLSNPLFFCALLLKFRTIFAACDSSQFECDNGSCISQYDVCNGEKNCPDGSDETALTCVSQRQHCTKPYFQCTYGACVIGTAGCNGVNECADGSDETRLRCGNEDDIRQHDRRLQGNCKENEFKCPSGICLDKSNFLCDGKDDCADGTGFDESVELCGHMECPAYSFKCGTGGCISGSLSCNGENDCYDGSDEAPLLCNTTKKVTTPVVTETPLELLGCPLPLGDERPILTGDGSRVLTGPITRGTVRFSCKQGYVLEGEESSYCAKNKWSTSTIPKCVKYCSTAGEFDGYSTKALCTHNGQQVECRKPFHPPGTEVKFVCSTGFKTLSPLPEMRCMKGGYWNRGRQRCEQDCGQLATPIKQFSSGGYTINNTVVPWHVGLYVWHNEKDYHFQCGGSLLTPDLVITAAHCVYDEGTRLPYSYDTFRVIAAKFYRNYGETTPEEKRRDVRLIEIAPGYKGRTENYYQDLALLTLDEPFELSHVIRPICVTFASFAEKESVTDDVQGKFAGWNIENKHELQFVPAVSKSNSVCRRNLRDIQADKFCIFTQGKSLACQGDSGGGFTSELPTNAFSTWNTARHFLFGVISNAPNADQCAHSLTVMTNIQHFEDMILNAMNRSVETRS</sequence>
<accession>Q9VER6</accession>
<accession>Q6NP02</accession>
<name>MODSP_DROME</name>
<evidence type="ECO:0000255" key="1"/>
<evidence type="ECO:0000255" key="2">
    <source>
        <dbReference type="PROSITE-ProRule" id="PRU00124"/>
    </source>
</evidence>
<evidence type="ECO:0000255" key="3">
    <source>
        <dbReference type="PROSITE-ProRule" id="PRU00274"/>
    </source>
</evidence>
<evidence type="ECO:0000255" key="4">
    <source>
        <dbReference type="PROSITE-ProRule" id="PRU00302"/>
    </source>
</evidence>
<evidence type="ECO:0000255" key="5">
    <source>
        <dbReference type="PROSITE-ProRule" id="PRU00498"/>
    </source>
</evidence>
<evidence type="ECO:0000269" key="6">
    <source>
    </source>
</evidence>
<evidence type="ECO:0000269" key="7">
    <source>
    </source>
</evidence>
<evidence type="ECO:0000303" key="8">
    <source>
    </source>
</evidence>
<evidence type="ECO:0000305" key="9"/>
<evidence type="ECO:0000305" key="10">
    <source>
    </source>
</evidence>
<evidence type="ECO:0000312" key="11">
    <source>
        <dbReference type="EMBL" id="AAM50824.1"/>
    </source>
</evidence>
<evidence type="ECO:0000312" key="12">
    <source>
        <dbReference type="EMBL" id="AAR82796.1"/>
    </source>
</evidence>
<evidence type="ECO:0000312" key="13">
    <source>
        <dbReference type="FlyBase" id="FBgn0051217"/>
    </source>
</evidence>
<evidence type="ECO:0000312" key="14">
    <source>
        <dbReference type="Proteomes" id="UP000000803"/>
    </source>
</evidence>